<comment type="function">
    <text evidence="1">This protein is involved in the repair of mismatches in DNA. It is required for dam-dependent methyl-directed DNA mismatch repair. May act as a 'molecular matchmaker', a protein that promotes the formation of a stable complex between two or more DNA-binding proteins in an ATP-dependent manner without itself being part of a final effector complex.</text>
</comment>
<comment type="similarity">
    <text evidence="1">Belongs to the DNA mismatch repair MutL/HexB family.</text>
</comment>
<evidence type="ECO:0000255" key="1">
    <source>
        <dbReference type="HAMAP-Rule" id="MF_00149"/>
    </source>
</evidence>
<sequence length="520" mass="59793">MRRIKPLSEDLIRKIAAGEVVERPANVLKELIENAIDAGSDRIDIFIEKGGKRLIQVVDNGEGIHPDDMLDCVKRYTTSKISSEDDLYSISSYGFRGEALYSISSVSKFSIVSRPEDLSVGKELYIEGGVFRSFTETGAPVGTKVRVKDIFFNTPVRKKFLKSERTEFVHCLKTFINYAVVNTDIHFRLYHNGRELMNLPPSDLKKRITYIYPELSGRLLELDYTDETGRIYGYISTDERFKKEGIVYVNKRPVKNRELRKIIKSLISEKFYVLFIELPPYFVDHNVHPAKIEVKFKNDTAVKNLVREGLKALETPFKKGVTFDYTVSQRKGSYGKEKVFDLLGQVENTFIVVYYDGDIYLIDQHVVHERINYEILMEDLREDGFIKRKILNRNITHSISELEKALIEDKKGTLERSGFSFDIDGYNLVIKEIPVFVSEDQALDIFFRILMDEDAETVDYVIGEIACKLSVKSGDILSDEKAKLILKRWFETDSPNLCPHGRPVYYKVSIDDVKKAIGRG</sequence>
<name>MUTL_PERMH</name>
<gene>
    <name evidence="1" type="primary">mutL</name>
    <name type="ordered locus">PERMA_0003</name>
</gene>
<protein>
    <recommendedName>
        <fullName evidence="1">DNA mismatch repair protein MutL</fullName>
    </recommendedName>
</protein>
<dbReference type="EMBL" id="CP001230">
    <property type="protein sequence ID" value="ACO03215.1"/>
    <property type="molecule type" value="Genomic_DNA"/>
</dbReference>
<dbReference type="RefSeq" id="WP_012675454.1">
    <property type="nucleotide sequence ID" value="NC_012440.1"/>
</dbReference>
<dbReference type="SMR" id="C0QSY6"/>
<dbReference type="STRING" id="123214.PERMA_0003"/>
<dbReference type="PaxDb" id="123214-PERMA_0003"/>
<dbReference type="KEGG" id="pmx:PERMA_0003"/>
<dbReference type="eggNOG" id="COG0323">
    <property type="taxonomic scope" value="Bacteria"/>
</dbReference>
<dbReference type="HOGENOM" id="CLU_004131_4_1_0"/>
<dbReference type="OrthoDB" id="9763467at2"/>
<dbReference type="Proteomes" id="UP000001366">
    <property type="component" value="Chromosome"/>
</dbReference>
<dbReference type="GO" id="GO:0032300">
    <property type="term" value="C:mismatch repair complex"/>
    <property type="evidence" value="ECO:0007669"/>
    <property type="project" value="InterPro"/>
</dbReference>
<dbReference type="GO" id="GO:0005524">
    <property type="term" value="F:ATP binding"/>
    <property type="evidence" value="ECO:0007669"/>
    <property type="project" value="InterPro"/>
</dbReference>
<dbReference type="GO" id="GO:0016887">
    <property type="term" value="F:ATP hydrolysis activity"/>
    <property type="evidence" value="ECO:0007669"/>
    <property type="project" value="InterPro"/>
</dbReference>
<dbReference type="GO" id="GO:0140664">
    <property type="term" value="F:ATP-dependent DNA damage sensor activity"/>
    <property type="evidence" value="ECO:0007669"/>
    <property type="project" value="InterPro"/>
</dbReference>
<dbReference type="GO" id="GO:0030983">
    <property type="term" value="F:mismatched DNA binding"/>
    <property type="evidence" value="ECO:0007669"/>
    <property type="project" value="InterPro"/>
</dbReference>
<dbReference type="GO" id="GO:0006298">
    <property type="term" value="P:mismatch repair"/>
    <property type="evidence" value="ECO:0007669"/>
    <property type="project" value="UniProtKB-UniRule"/>
</dbReference>
<dbReference type="CDD" id="cd16926">
    <property type="entry name" value="HATPase_MutL-MLH-PMS-like"/>
    <property type="match status" value="1"/>
</dbReference>
<dbReference type="CDD" id="cd00782">
    <property type="entry name" value="MutL_Trans"/>
    <property type="match status" value="1"/>
</dbReference>
<dbReference type="FunFam" id="3.30.565.10:FF:000003">
    <property type="entry name" value="DNA mismatch repair endonuclease MutL"/>
    <property type="match status" value="1"/>
</dbReference>
<dbReference type="Gene3D" id="3.30.230.10">
    <property type="match status" value="1"/>
</dbReference>
<dbReference type="Gene3D" id="3.30.565.10">
    <property type="entry name" value="Histidine kinase-like ATPase, C-terminal domain"/>
    <property type="match status" value="1"/>
</dbReference>
<dbReference type="Gene3D" id="3.30.1540.20">
    <property type="entry name" value="MutL, C-terminal domain, dimerisation subdomain"/>
    <property type="match status" value="1"/>
</dbReference>
<dbReference type="Gene3D" id="3.30.1370.100">
    <property type="entry name" value="MutL, C-terminal domain, regulatory subdomain"/>
    <property type="match status" value="1"/>
</dbReference>
<dbReference type="HAMAP" id="MF_00149">
    <property type="entry name" value="DNA_mis_repair"/>
    <property type="match status" value="1"/>
</dbReference>
<dbReference type="InterPro" id="IPR014762">
    <property type="entry name" value="DNA_mismatch_repair_CS"/>
</dbReference>
<dbReference type="InterPro" id="IPR020667">
    <property type="entry name" value="DNA_mismatch_repair_MutL"/>
</dbReference>
<dbReference type="InterPro" id="IPR013507">
    <property type="entry name" value="DNA_mismatch_S5_2-like"/>
</dbReference>
<dbReference type="InterPro" id="IPR036890">
    <property type="entry name" value="HATPase_C_sf"/>
</dbReference>
<dbReference type="InterPro" id="IPR002099">
    <property type="entry name" value="MutL/Mlh/PMS"/>
</dbReference>
<dbReference type="InterPro" id="IPR038973">
    <property type="entry name" value="MutL/Mlh/Pms-like"/>
</dbReference>
<dbReference type="InterPro" id="IPR014790">
    <property type="entry name" value="MutL_C"/>
</dbReference>
<dbReference type="InterPro" id="IPR042120">
    <property type="entry name" value="MutL_C_dimsub"/>
</dbReference>
<dbReference type="InterPro" id="IPR042121">
    <property type="entry name" value="MutL_C_regsub"/>
</dbReference>
<dbReference type="InterPro" id="IPR037198">
    <property type="entry name" value="MutL_C_sf"/>
</dbReference>
<dbReference type="InterPro" id="IPR020568">
    <property type="entry name" value="Ribosomal_Su5_D2-typ_SF"/>
</dbReference>
<dbReference type="InterPro" id="IPR014721">
    <property type="entry name" value="Ribsml_uS5_D2-typ_fold_subgr"/>
</dbReference>
<dbReference type="NCBIfam" id="TIGR00585">
    <property type="entry name" value="mutl"/>
    <property type="match status" value="1"/>
</dbReference>
<dbReference type="PANTHER" id="PTHR10073">
    <property type="entry name" value="DNA MISMATCH REPAIR PROTEIN MLH, PMS, MUTL"/>
    <property type="match status" value="1"/>
</dbReference>
<dbReference type="PANTHER" id="PTHR10073:SF12">
    <property type="entry name" value="DNA MISMATCH REPAIR PROTEIN MLH1"/>
    <property type="match status" value="1"/>
</dbReference>
<dbReference type="Pfam" id="PF01119">
    <property type="entry name" value="DNA_mis_repair"/>
    <property type="match status" value="1"/>
</dbReference>
<dbReference type="Pfam" id="PF13589">
    <property type="entry name" value="HATPase_c_3"/>
    <property type="match status" value="1"/>
</dbReference>
<dbReference type="Pfam" id="PF08676">
    <property type="entry name" value="MutL_C"/>
    <property type="match status" value="1"/>
</dbReference>
<dbReference type="SMART" id="SM01340">
    <property type="entry name" value="DNA_mis_repair"/>
    <property type="match status" value="1"/>
</dbReference>
<dbReference type="SMART" id="SM00853">
    <property type="entry name" value="MutL_C"/>
    <property type="match status" value="1"/>
</dbReference>
<dbReference type="SUPFAM" id="SSF55874">
    <property type="entry name" value="ATPase domain of HSP90 chaperone/DNA topoisomerase II/histidine kinase"/>
    <property type="match status" value="1"/>
</dbReference>
<dbReference type="SUPFAM" id="SSF118116">
    <property type="entry name" value="DNA mismatch repair protein MutL"/>
    <property type="match status" value="1"/>
</dbReference>
<dbReference type="SUPFAM" id="SSF54211">
    <property type="entry name" value="Ribosomal protein S5 domain 2-like"/>
    <property type="match status" value="1"/>
</dbReference>
<dbReference type="PROSITE" id="PS00058">
    <property type="entry name" value="DNA_MISMATCH_REPAIR_1"/>
    <property type="match status" value="1"/>
</dbReference>
<proteinExistence type="inferred from homology"/>
<keyword id="KW-0227">DNA damage</keyword>
<keyword id="KW-0234">DNA repair</keyword>
<keyword id="KW-1185">Reference proteome</keyword>
<reference key="1">
    <citation type="journal article" date="2009" name="J. Bacteriol.">
        <title>Complete and draft genome sequences of six members of the Aquificales.</title>
        <authorList>
            <person name="Reysenbach A.-L."/>
            <person name="Hamamura N."/>
            <person name="Podar M."/>
            <person name="Griffiths E."/>
            <person name="Ferreira S."/>
            <person name="Hochstein R."/>
            <person name="Heidelberg J."/>
            <person name="Johnson J."/>
            <person name="Mead D."/>
            <person name="Pohorille A."/>
            <person name="Sarmiento M."/>
            <person name="Schweighofer K."/>
            <person name="Seshadri R."/>
            <person name="Voytek M.A."/>
        </authorList>
    </citation>
    <scope>NUCLEOTIDE SEQUENCE [LARGE SCALE GENOMIC DNA]</scope>
    <source>
        <strain>DSM 14350 / EX-H1</strain>
    </source>
</reference>
<feature type="chain" id="PRO_1000203394" description="DNA mismatch repair protein MutL">
    <location>
        <begin position="1"/>
        <end position="520"/>
    </location>
</feature>
<organism>
    <name type="scientific">Persephonella marina (strain DSM 14350 / EX-H1)</name>
    <dbReference type="NCBI Taxonomy" id="123214"/>
    <lineage>
        <taxon>Bacteria</taxon>
        <taxon>Pseudomonadati</taxon>
        <taxon>Aquificota</taxon>
        <taxon>Aquificia</taxon>
        <taxon>Aquificales</taxon>
        <taxon>Hydrogenothermaceae</taxon>
        <taxon>Persephonella</taxon>
    </lineage>
</organism>
<accession>C0QSY6</accession>